<reference key="1">
    <citation type="journal article" date="2004" name="Nat. Genet.">
        <title>Comparison of genome degradation in Paratyphi A and Typhi, human-restricted serovars of Salmonella enterica that cause typhoid.</title>
        <authorList>
            <person name="McClelland M."/>
            <person name="Sanderson K.E."/>
            <person name="Clifton S.W."/>
            <person name="Latreille P."/>
            <person name="Porwollik S."/>
            <person name="Sabo A."/>
            <person name="Meyer R."/>
            <person name="Bieri T."/>
            <person name="Ozersky P."/>
            <person name="McLellan M."/>
            <person name="Harkins C.R."/>
            <person name="Wang C."/>
            <person name="Nguyen C."/>
            <person name="Berghoff A."/>
            <person name="Elliott G."/>
            <person name="Kohlberg S."/>
            <person name="Strong C."/>
            <person name="Du F."/>
            <person name="Carter J."/>
            <person name="Kremizki C."/>
            <person name="Layman D."/>
            <person name="Leonard S."/>
            <person name="Sun H."/>
            <person name="Fulton L."/>
            <person name="Nash W."/>
            <person name="Miner T."/>
            <person name="Minx P."/>
            <person name="Delehaunty K."/>
            <person name="Fronick C."/>
            <person name="Magrini V."/>
            <person name="Nhan M."/>
            <person name="Warren W."/>
            <person name="Florea L."/>
            <person name="Spieth J."/>
            <person name="Wilson R.K."/>
        </authorList>
    </citation>
    <scope>NUCLEOTIDE SEQUENCE [LARGE SCALE GENOMIC DNA]</scope>
    <source>
        <strain>ATCC 9150 / SARB42</strain>
    </source>
</reference>
<organism>
    <name type="scientific">Salmonella paratyphi A (strain ATCC 9150 / SARB42)</name>
    <dbReference type="NCBI Taxonomy" id="295319"/>
    <lineage>
        <taxon>Bacteria</taxon>
        <taxon>Pseudomonadati</taxon>
        <taxon>Pseudomonadota</taxon>
        <taxon>Gammaproteobacteria</taxon>
        <taxon>Enterobacterales</taxon>
        <taxon>Enterobacteriaceae</taxon>
        <taxon>Salmonella</taxon>
    </lineage>
</organism>
<feature type="chain" id="PRO_0000358688" description="NADH-quinone oxidoreductase subunit C/D">
    <location>
        <begin position="1"/>
        <end position="600"/>
    </location>
</feature>
<feature type="region of interest" description="NADH dehydrogenase I subunit C" evidence="1">
    <location>
        <begin position="1"/>
        <end position="190"/>
    </location>
</feature>
<feature type="region of interest" description="NADH dehydrogenase I subunit D" evidence="1">
    <location>
        <begin position="214"/>
        <end position="600"/>
    </location>
</feature>
<keyword id="KW-0997">Cell inner membrane</keyword>
<keyword id="KW-1003">Cell membrane</keyword>
<keyword id="KW-0472">Membrane</keyword>
<keyword id="KW-0511">Multifunctional enzyme</keyword>
<keyword id="KW-0520">NAD</keyword>
<keyword id="KW-0874">Quinone</keyword>
<keyword id="KW-1278">Translocase</keyword>
<keyword id="KW-0813">Transport</keyword>
<keyword id="KW-0830">Ubiquinone</keyword>
<name>NUOCD_SALPA</name>
<comment type="function">
    <text evidence="1">NDH-1 shuttles electrons from NADH, via FMN and iron-sulfur (Fe-S) centers, to quinones in the respiratory chain. The immediate electron acceptor for the enzyme in this species is believed to be ubiquinone. Couples the redox reaction to proton translocation (for every two electrons transferred, four hydrogen ions are translocated across the cytoplasmic membrane), and thus conserves the redox energy in a proton gradient.</text>
</comment>
<comment type="catalytic activity">
    <reaction evidence="1">
        <text>a quinone + NADH + 5 H(+)(in) = a quinol + NAD(+) + 4 H(+)(out)</text>
        <dbReference type="Rhea" id="RHEA:57888"/>
        <dbReference type="ChEBI" id="CHEBI:15378"/>
        <dbReference type="ChEBI" id="CHEBI:24646"/>
        <dbReference type="ChEBI" id="CHEBI:57540"/>
        <dbReference type="ChEBI" id="CHEBI:57945"/>
        <dbReference type="ChEBI" id="CHEBI:132124"/>
    </reaction>
</comment>
<comment type="subunit">
    <text evidence="1">NDH-1 is composed of 13 different subunits. Subunits NuoB, CD, E, F, and G constitute the peripheral sector of the complex.</text>
</comment>
<comment type="subcellular location">
    <subcellularLocation>
        <location evidence="1">Cell inner membrane</location>
        <topology evidence="1">Peripheral membrane protein</topology>
        <orientation evidence="1">Cytoplasmic side</orientation>
    </subcellularLocation>
</comment>
<comment type="similarity">
    <text evidence="1">In the N-terminal section; belongs to the complex I 30 kDa subunit family.</text>
</comment>
<comment type="similarity">
    <text evidence="1">In the C-terminal section; belongs to the complex I 49 kDa subunit family.</text>
</comment>
<proteinExistence type="inferred from homology"/>
<gene>
    <name evidence="1" type="primary">nuoC</name>
    <name evidence="1" type="synonym">nuoCD</name>
    <name evidence="1" type="synonym">nuoD</name>
    <name type="ordered locus">SPA0538</name>
</gene>
<accession>Q5PN53</accession>
<sequence>MVNNMTDLTAQDAAWSTRDHLDDPVIGELRNRFGPDAFTVQATRTGIPVVWVKREQLLEVGDFLKKLPKPYVMLFDLHGMDERLRTHRDGLPAADFSVFYHLISIERNRDIMLKVALSENDLRVPTFTKLFPNANWYERETWEMFGIDIEGHPHLTRIMMPQTWEGHPLRKDYPARATEFDPFELTKAKQDLEMEALTFKPEDWGMKRGTDNEDFMFLNLGPNHPSAHGAFRIILQLDGEEIVDCVPDIGYHHRGAEKMGERQSWHSYIPYTDRIEYLGGCVNEMPYVLAVEKLAGITVPDRVNVIRVMLSELFRINSHLLYISTFIQDVGAMTPVFFAFTDRQKIYDLVEAITGFRMHPAWFRIGGVAHDLPRGWDRLLREFLEWMPKRLDSYEKAALRNTILKGRSQGVAAYGAKEALEWGTTGAGLRATGIDFDVRKWRPYSGYENFDFEVPVGGGVSDCYTRVMLKVEELRQSLRILQQCLDNMPEGPFKADHPLTTPPPKERTLQHIETLITHFLQVSWGPVMPAQESFQMVEATKGINSYYLTSDGSTMSYRTRVRTPSFAHLQQIPSAIRGSLVSDLIVYLGSIDFVMSDVDR</sequence>
<dbReference type="EC" id="7.1.1.-" evidence="1"/>
<dbReference type="EMBL" id="CP000026">
    <property type="protein sequence ID" value="AAV76540.1"/>
    <property type="molecule type" value="Genomic_DNA"/>
</dbReference>
<dbReference type="RefSeq" id="WP_000247855.1">
    <property type="nucleotide sequence ID" value="NC_006511.1"/>
</dbReference>
<dbReference type="SMR" id="Q5PN53"/>
<dbReference type="KEGG" id="spt:SPA0538"/>
<dbReference type="HOGENOM" id="CLU_015134_3_2_6"/>
<dbReference type="Proteomes" id="UP000008185">
    <property type="component" value="Chromosome"/>
</dbReference>
<dbReference type="GO" id="GO:0030964">
    <property type="term" value="C:NADH dehydrogenase complex"/>
    <property type="evidence" value="ECO:0007669"/>
    <property type="project" value="InterPro"/>
</dbReference>
<dbReference type="GO" id="GO:0005886">
    <property type="term" value="C:plasma membrane"/>
    <property type="evidence" value="ECO:0007669"/>
    <property type="project" value="UniProtKB-SubCell"/>
</dbReference>
<dbReference type="GO" id="GO:0051287">
    <property type="term" value="F:NAD binding"/>
    <property type="evidence" value="ECO:0007669"/>
    <property type="project" value="InterPro"/>
</dbReference>
<dbReference type="GO" id="GO:0008137">
    <property type="term" value="F:NADH dehydrogenase (ubiquinone) activity"/>
    <property type="evidence" value="ECO:0007669"/>
    <property type="project" value="InterPro"/>
</dbReference>
<dbReference type="GO" id="GO:0050136">
    <property type="term" value="F:NADH:ubiquinone reductase (non-electrogenic) activity"/>
    <property type="evidence" value="ECO:0007669"/>
    <property type="project" value="UniProtKB-UniRule"/>
</dbReference>
<dbReference type="GO" id="GO:0048038">
    <property type="term" value="F:quinone binding"/>
    <property type="evidence" value="ECO:0007669"/>
    <property type="project" value="UniProtKB-KW"/>
</dbReference>
<dbReference type="FunFam" id="1.10.645.10:FF:000001">
    <property type="entry name" value="NADH-quinone oxidoreductase subunit C/D"/>
    <property type="match status" value="1"/>
</dbReference>
<dbReference type="FunFam" id="3.30.460.80:FF:000001">
    <property type="entry name" value="NADH-quinone oxidoreductase subunit C/D"/>
    <property type="match status" value="1"/>
</dbReference>
<dbReference type="Gene3D" id="1.10.645.10">
    <property type="entry name" value="Cytochrome-c3 Hydrogenase, chain B"/>
    <property type="match status" value="1"/>
</dbReference>
<dbReference type="Gene3D" id="3.30.460.80">
    <property type="entry name" value="NADH:ubiquinone oxidoreductase, 30kDa subunit"/>
    <property type="match status" value="1"/>
</dbReference>
<dbReference type="HAMAP" id="MF_01359">
    <property type="entry name" value="NDH1_NuoCD_1"/>
    <property type="match status" value="1"/>
</dbReference>
<dbReference type="HAMAP" id="MF_01358">
    <property type="entry name" value="NDH1_NuoD"/>
    <property type="match status" value="1"/>
</dbReference>
<dbReference type="InterPro" id="IPR010218">
    <property type="entry name" value="NADH_DH_suC"/>
</dbReference>
<dbReference type="InterPro" id="IPR023062">
    <property type="entry name" value="NADH_DH_suCD"/>
</dbReference>
<dbReference type="InterPro" id="IPR001135">
    <property type="entry name" value="NADH_Q_OxRdtase_suD"/>
</dbReference>
<dbReference type="InterPro" id="IPR037232">
    <property type="entry name" value="NADH_quin_OxRdtase_su_C/D-like"/>
</dbReference>
<dbReference type="InterPro" id="IPR001268">
    <property type="entry name" value="NADH_UbQ_OxRdtase_30kDa_su"/>
</dbReference>
<dbReference type="InterPro" id="IPR014029">
    <property type="entry name" value="NADH_UbQ_OxRdtase_49kDa_CS"/>
</dbReference>
<dbReference type="InterPro" id="IPR022885">
    <property type="entry name" value="NDH1_su_D/H"/>
</dbReference>
<dbReference type="InterPro" id="IPR029014">
    <property type="entry name" value="NiFe-Hase_large"/>
</dbReference>
<dbReference type="NCBIfam" id="TIGR01961">
    <property type="entry name" value="NuoC_fam"/>
    <property type="match status" value="1"/>
</dbReference>
<dbReference type="NCBIfam" id="TIGR01962">
    <property type="entry name" value="NuoD"/>
    <property type="match status" value="1"/>
</dbReference>
<dbReference type="NCBIfam" id="NF004739">
    <property type="entry name" value="PRK06075.1"/>
    <property type="match status" value="1"/>
</dbReference>
<dbReference type="NCBIfam" id="NF008728">
    <property type="entry name" value="PRK11742.1"/>
    <property type="match status" value="1"/>
</dbReference>
<dbReference type="PANTHER" id="PTHR11993:SF45">
    <property type="entry name" value="NADH-QUINONE OXIDOREDUCTASE SUBUNIT C_D"/>
    <property type="match status" value="1"/>
</dbReference>
<dbReference type="PANTHER" id="PTHR11993">
    <property type="entry name" value="NADH-UBIQUINONE OXIDOREDUCTASE 49 KDA SUBUNIT"/>
    <property type="match status" value="1"/>
</dbReference>
<dbReference type="Pfam" id="PF00329">
    <property type="entry name" value="Complex1_30kDa"/>
    <property type="match status" value="1"/>
</dbReference>
<dbReference type="Pfam" id="PF00346">
    <property type="entry name" value="Complex1_49kDa"/>
    <property type="match status" value="1"/>
</dbReference>
<dbReference type="SUPFAM" id="SSF56762">
    <property type="entry name" value="HydB/Nqo4-like"/>
    <property type="match status" value="1"/>
</dbReference>
<dbReference type="SUPFAM" id="SSF143243">
    <property type="entry name" value="Nqo5-like"/>
    <property type="match status" value="1"/>
</dbReference>
<dbReference type="PROSITE" id="PS00535">
    <property type="entry name" value="COMPLEX1_49K"/>
    <property type="match status" value="1"/>
</dbReference>
<protein>
    <recommendedName>
        <fullName evidence="1">NADH-quinone oxidoreductase subunit C/D</fullName>
        <ecNumber evidence="1">7.1.1.-</ecNumber>
    </recommendedName>
    <alternativeName>
        <fullName evidence="1">NADH dehydrogenase I subunit C/D</fullName>
    </alternativeName>
    <alternativeName>
        <fullName evidence="1">NDH-1 subunit C/D</fullName>
    </alternativeName>
</protein>
<evidence type="ECO:0000255" key="1">
    <source>
        <dbReference type="HAMAP-Rule" id="MF_01359"/>
    </source>
</evidence>